<protein>
    <recommendedName>
        <fullName evidence="10">AT-hook motif nuclear-localized protein 23</fullName>
    </recommendedName>
</protein>
<sequence>MAGLDLGTAFRYVNHQLHRPDLHLHHNSSSDDVTPGAGMGHFTVDDEDNNNNHQGLDLASGGGSGSSGGGGGHGGGGDVVGRRPRGRPPGSKNKPKPPVIITRESANTLRAHILEVTNGCDVFDCVATYARRRQRGICVLSGSGTVTNVSIRQPSAAGAVVTLQGTFEILSLSGSFLPPPAPPGATSLTIFLAGGQGQVVGGSVVGELTAAGPVIVIAASFTNVAYERLPLEEDEQQQQLGGGSNGGGNLFPEVAAGGGGGLPFFNLPMNMQPNVQLPVEGWPGNSGGRGPF</sequence>
<organism>
    <name type="scientific">Arabidopsis thaliana</name>
    <name type="common">Mouse-ear cress</name>
    <dbReference type="NCBI Taxonomy" id="3702"/>
    <lineage>
        <taxon>Eukaryota</taxon>
        <taxon>Viridiplantae</taxon>
        <taxon>Streptophyta</taxon>
        <taxon>Embryophyta</taxon>
        <taxon>Tracheophyta</taxon>
        <taxon>Spermatophyta</taxon>
        <taxon>Magnoliopsida</taxon>
        <taxon>eudicotyledons</taxon>
        <taxon>Gunneridae</taxon>
        <taxon>Pentapetalae</taxon>
        <taxon>rosids</taxon>
        <taxon>malvids</taxon>
        <taxon>Brassicales</taxon>
        <taxon>Brassicaceae</taxon>
        <taxon>Camelineae</taxon>
        <taxon>Arabidopsis</taxon>
    </lineage>
</organism>
<accession>O23620</accession>
<evidence type="ECO:0000250" key="1">
    <source>
        <dbReference type="UniProtKB" id="Q8VYJ2"/>
    </source>
</evidence>
<evidence type="ECO:0000255" key="2">
    <source>
        <dbReference type="PROSITE-ProRule" id="PRU01078"/>
    </source>
</evidence>
<evidence type="ECO:0000256" key="3">
    <source>
        <dbReference type="SAM" id="MobiDB-lite"/>
    </source>
</evidence>
<evidence type="ECO:0000269" key="4">
    <source>
    </source>
</evidence>
<evidence type="ECO:0000303" key="5">
    <source>
    </source>
</evidence>
<evidence type="ECO:0000305" key="6"/>
<evidence type="ECO:0000312" key="7">
    <source>
        <dbReference type="Araport" id="AT4G17800"/>
    </source>
</evidence>
<evidence type="ECO:0000312" key="8">
    <source>
        <dbReference type="EMBL" id="CAB10560.1"/>
    </source>
</evidence>
<evidence type="ECO:0000312" key="9">
    <source>
        <dbReference type="EMBL" id="CAB78783.1"/>
    </source>
</evidence>
<evidence type="ECO:0000312" key="10">
    <source>
        <dbReference type="EMBL" id="FAA00294.1"/>
    </source>
</evidence>
<comment type="function">
    <text evidence="1">Transcription factor that specifically binds AT-rich DNA sequences related to the nuclear matrix attachment regions (MARs).</text>
</comment>
<comment type="subcellular location">
    <subcellularLocation>
        <location evidence="1">Nucleus</location>
    </subcellularLocation>
</comment>
<comment type="domain">
    <text evidence="4">The PPC domain mediates interactions between AHL proteins.</text>
</comment>
<reference key="1">
    <citation type="journal article" date="1998" name="Nature">
        <title>Analysis of 1.9 Mb of contiguous sequence from chromosome 4 of Arabidopsis thaliana.</title>
        <authorList>
            <person name="Bevan M."/>
            <person name="Bancroft I."/>
            <person name="Bent E."/>
            <person name="Love K."/>
            <person name="Goodman H.M."/>
            <person name="Dean C."/>
            <person name="Bergkamp R."/>
            <person name="Dirkse W."/>
            <person name="van Staveren M."/>
            <person name="Stiekema W."/>
            <person name="Drost L."/>
            <person name="Ridley P."/>
            <person name="Hudson S.-A."/>
            <person name="Patel K."/>
            <person name="Murphy G."/>
            <person name="Piffanelli P."/>
            <person name="Wedler H."/>
            <person name="Wedler E."/>
            <person name="Wambutt R."/>
            <person name="Weitzenegger T."/>
            <person name="Pohl T."/>
            <person name="Terryn N."/>
            <person name="Gielen J."/>
            <person name="Villarroel R."/>
            <person name="De Clercq R."/>
            <person name="van Montagu M."/>
            <person name="Lecharny A."/>
            <person name="Aubourg S."/>
            <person name="Gy I."/>
            <person name="Kreis M."/>
            <person name="Lao N."/>
            <person name="Kavanagh T."/>
            <person name="Hempel S."/>
            <person name="Kotter P."/>
            <person name="Entian K.-D."/>
            <person name="Rieger M."/>
            <person name="Schaefer M."/>
            <person name="Funk B."/>
            <person name="Mueller-Auer S."/>
            <person name="Silvey M."/>
            <person name="James R."/>
            <person name="Monfort A."/>
            <person name="Pons A."/>
            <person name="Puigdomenech P."/>
            <person name="Douka A."/>
            <person name="Voukelatou E."/>
            <person name="Milioni D."/>
            <person name="Hatzopoulos P."/>
            <person name="Piravandi E."/>
            <person name="Obermaier B."/>
            <person name="Hilbert H."/>
            <person name="Duesterhoeft A."/>
            <person name="Moores T."/>
            <person name="Jones J.D.G."/>
            <person name="Eneva T."/>
            <person name="Palme K."/>
            <person name="Benes V."/>
            <person name="Rechmann S."/>
            <person name="Ansorge W."/>
            <person name="Cooke R."/>
            <person name="Berger C."/>
            <person name="Delseny M."/>
            <person name="Voet M."/>
            <person name="Volckaert G."/>
            <person name="Mewes H.-W."/>
            <person name="Klosterman S."/>
            <person name="Schueller C."/>
            <person name="Chalwatzis N."/>
        </authorList>
    </citation>
    <scope>NUCLEOTIDE SEQUENCE [LARGE SCALE GENOMIC DNA]</scope>
    <source>
        <strain>cv. Columbia</strain>
    </source>
</reference>
<reference key="2">
    <citation type="journal article" date="1999" name="Nature">
        <title>Sequence and analysis of chromosome 4 of the plant Arabidopsis thaliana.</title>
        <authorList>
            <person name="Mayer K.F.X."/>
            <person name="Schueller C."/>
            <person name="Wambutt R."/>
            <person name="Murphy G."/>
            <person name="Volckaert G."/>
            <person name="Pohl T."/>
            <person name="Duesterhoeft A."/>
            <person name="Stiekema W."/>
            <person name="Entian K.-D."/>
            <person name="Terryn N."/>
            <person name="Harris B."/>
            <person name="Ansorge W."/>
            <person name="Brandt P."/>
            <person name="Grivell L.A."/>
            <person name="Rieger M."/>
            <person name="Weichselgartner M."/>
            <person name="de Simone V."/>
            <person name="Obermaier B."/>
            <person name="Mache R."/>
            <person name="Mueller M."/>
            <person name="Kreis M."/>
            <person name="Delseny M."/>
            <person name="Puigdomenech P."/>
            <person name="Watson M."/>
            <person name="Schmidtheini T."/>
            <person name="Reichert B."/>
            <person name="Portetelle D."/>
            <person name="Perez-Alonso M."/>
            <person name="Boutry M."/>
            <person name="Bancroft I."/>
            <person name="Vos P."/>
            <person name="Hoheisel J."/>
            <person name="Zimmermann W."/>
            <person name="Wedler H."/>
            <person name="Ridley P."/>
            <person name="Langham S.-A."/>
            <person name="McCullagh B."/>
            <person name="Bilham L."/>
            <person name="Robben J."/>
            <person name="van der Schueren J."/>
            <person name="Grymonprez B."/>
            <person name="Chuang Y.-J."/>
            <person name="Vandenbussche F."/>
            <person name="Braeken M."/>
            <person name="Weltjens I."/>
            <person name="Voet M."/>
            <person name="Bastiaens I."/>
            <person name="Aert R."/>
            <person name="Defoor E."/>
            <person name="Weitzenegger T."/>
            <person name="Bothe G."/>
            <person name="Ramsperger U."/>
            <person name="Hilbert H."/>
            <person name="Braun M."/>
            <person name="Holzer E."/>
            <person name="Brandt A."/>
            <person name="Peters S."/>
            <person name="van Staveren M."/>
            <person name="Dirkse W."/>
            <person name="Mooijman P."/>
            <person name="Klein Lankhorst R."/>
            <person name="Rose M."/>
            <person name="Hauf J."/>
            <person name="Koetter P."/>
            <person name="Berneiser S."/>
            <person name="Hempel S."/>
            <person name="Feldpausch M."/>
            <person name="Lamberth S."/>
            <person name="Van den Daele H."/>
            <person name="De Keyser A."/>
            <person name="Buysshaert C."/>
            <person name="Gielen J."/>
            <person name="Villarroel R."/>
            <person name="De Clercq R."/>
            <person name="van Montagu M."/>
            <person name="Rogers J."/>
            <person name="Cronin A."/>
            <person name="Quail M.A."/>
            <person name="Bray-Allen S."/>
            <person name="Clark L."/>
            <person name="Doggett J."/>
            <person name="Hall S."/>
            <person name="Kay M."/>
            <person name="Lennard N."/>
            <person name="McLay K."/>
            <person name="Mayes R."/>
            <person name="Pettett A."/>
            <person name="Rajandream M.A."/>
            <person name="Lyne M."/>
            <person name="Benes V."/>
            <person name="Rechmann S."/>
            <person name="Borkova D."/>
            <person name="Bloecker H."/>
            <person name="Scharfe M."/>
            <person name="Grimm M."/>
            <person name="Loehnert T.-H."/>
            <person name="Dose S."/>
            <person name="de Haan M."/>
            <person name="Maarse A.C."/>
            <person name="Schaefer M."/>
            <person name="Mueller-Auer S."/>
            <person name="Gabel C."/>
            <person name="Fuchs M."/>
            <person name="Fartmann B."/>
            <person name="Granderath K."/>
            <person name="Dauner D."/>
            <person name="Herzl A."/>
            <person name="Neumann S."/>
            <person name="Argiriou A."/>
            <person name="Vitale D."/>
            <person name="Liguori R."/>
            <person name="Piravandi E."/>
            <person name="Massenet O."/>
            <person name="Quigley F."/>
            <person name="Clabauld G."/>
            <person name="Muendlein A."/>
            <person name="Felber R."/>
            <person name="Schnabl S."/>
            <person name="Hiller R."/>
            <person name="Schmidt W."/>
            <person name="Lecharny A."/>
            <person name="Aubourg S."/>
            <person name="Chefdor F."/>
            <person name="Cooke R."/>
            <person name="Berger C."/>
            <person name="Monfort A."/>
            <person name="Casacuberta E."/>
            <person name="Gibbons T."/>
            <person name="Weber N."/>
            <person name="Vandenbol M."/>
            <person name="Bargues M."/>
            <person name="Terol J."/>
            <person name="Torres A."/>
            <person name="Perez-Perez A."/>
            <person name="Purnelle B."/>
            <person name="Bent E."/>
            <person name="Johnson S."/>
            <person name="Tacon D."/>
            <person name="Jesse T."/>
            <person name="Heijnen L."/>
            <person name="Schwarz S."/>
            <person name="Scholler P."/>
            <person name="Heber S."/>
            <person name="Francs P."/>
            <person name="Bielke C."/>
            <person name="Frishman D."/>
            <person name="Haase D."/>
            <person name="Lemcke K."/>
            <person name="Mewes H.-W."/>
            <person name="Stocker S."/>
            <person name="Zaccaria P."/>
            <person name="Bevan M."/>
            <person name="Wilson R.K."/>
            <person name="de la Bastide M."/>
            <person name="Habermann K."/>
            <person name="Parnell L."/>
            <person name="Dedhia N."/>
            <person name="Gnoj L."/>
            <person name="Schutz K."/>
            <person name="Huang E."/>
            <person name="Spiegel L."/>
            <person name="Sekhon M."/>
            <person name="Murray J."/>
            <person name="Sheet P."/>
            <person name="Cordes M."/>
            <person name="Abu-Threideh J."/>
            <person name="Stoneking T."/>
            <person name="Kalicki J."/>
            <person name="Graves T."/>
            <person name="Harmon G."/>
            <person name="Edwards J."/>
            <person name="Latreille P."/>
            <person name="Courtney L."/>
            <person name="Cloud J."/>
            <person name="Abbott A."/>
            <person name="Scott K."/>
            <person name="Johnson D."/>
            <person name="Minx P."/>
            <person name="Bentley D."/>
            <person name="Fulton B."/>
            <person name="Miller N."/>
            <person name="Greco T."/>
            <person name="Kemp K."/>
            <person name="Kramer J."/>
            <person name="Fulton L."/>
            <person name="Mardis E."/>
            <person name="Dante M."/>
            <person name="Pepin K."/>
            <person name="Hillier L.W."/>
            <person name="Nelson J."/>
            <person name="Spieth J."/>
            <person name="Ryan E."/>
            <person name="Andrews S."/>
            <person name="Geisel C."/>
            <person name="Layman D."/>
            <person name="Du H."/>
            <person name="Ali J."/>
            <person name="Berghoff A."/>
            <person name="Jones K."/>
            <person name="Drone K."/>
            <person name="Cotton M."/>
            <person name="Joshu C."/>
            <person name="Antonoiu B."/>
            <person name="Zidanic M."/>
            <person name="Strong C."/>
            <person name="Sun H."/>
            <person name="Lamar B."/>
            <person name="Yordan C."/>
            <person name="Ma P."/>
            <person name="Zhong J."/>
            <person name="Preston R."/>
            <person name="Vil D."/>
            <person name="Shekher M."/>
            <person name="Matero A."/>
            <person name="Shah R."/>
            <person name="Swaby I.K."/>
            <person name="O'Shaughnessy A."/>
            <person name="Rodriguez M."/>
            <person name="Hoffman J."/>
            <person name="Till S."/>
            <person name="Granat S."/>
            <person name="Shohdy N."/>
            <person name="Hasegawa A."/>
            <person name="Hameed A."/>
            <person name="Lodhi M."/>
            <person name="Johnson A."/>
            <person name="Chen E."/>
            <person name="Marra M.A."/>
            <person name="Martienssen R."/>
            <person name="McCombie W.R."/>
        </authorList>
    </citation>
    <scope>NUCLEOTIDE SEQUENCE [LARGE SCALE GENOMIC DNA]</scope>
    <source>
        <strain>cv. Columbia</strain>
    </source>
</reference>
<reference key="3">
    <citation type="journal article" date="2017" name="Plant J.">
        <title>Araport11: a complete reannotation of the Arabidopsis thaliana reference genome.</title>
        <authorList>
            <person name="Cheng C.Y."/>
            <person name="Krishnakumar V."/>
            <person name="Chan A.P."/>
            <person name="Thibaud-Nissen F."/>
            <person name="Schobel S."/>
            <person name="Town C.D."/>
        </authorList>
    </citation>
    <scope>GENOME REANNOTATION</scope>
    <source>
        <strain>cv. Columbia</strain>
    </source>
</reference>
<reference key="4">
    <citation type="journal article" date="2003" name="Science">
        <title>Empirical analysis of transcriptional activity in the Arabidopsis genome.</title>
        <authorList>
            <person name="Yamada K."/>
            <person name="Lim J."/>
            <person name="Dale J.M."/>
            <person name="Chen H."/>
            <person name="Shinn P."/>
            <person name="Palm C.J."/>
            <person name="Southwick A.M."/>
            <person name="Wu H.C."/>
            <person name="Kim C.J."/>
            <person name="Nguyen M."/>
            <person name="Pham P.K."/>
            <person name="Cheuk R.F."/>
            <person name="Karlin-Newmann G."/>
            <person name="Liu S.X."/>
            <person name="Lam B."/>
            <person name="Sakano H."/>
            <person name="Wu T."/>
            <person name="Yu G."/>
            <person name="Miranda M."/>
            <person name="Quach H.L."/>
            <person name="Tripp M."/>
            <person name="Chang C.H."/>
            <person name="Lee J.M."/>
            <person name="Toriumi M.J."/>
            <person name="Chan M.M."/>
            <person name="Tang C.C."/>
            <person name="Onodera C.S."/>
            <person name="Deng J.M."/>
            <person name="Akiyama K."/>
            <person name="Ansari Y."/>
            <person name="Arakawa T."/>
            <person name="Banh J."/>
            <person name="Banno F."/>
            <person name="Bowser L."/>
            <person name="Brooks S.Y."/>
            <person name="Carninci P."/>
            <person name="Chao Q."/>
            <person name="Choy N."/>
            <person name="Enju A."/>
            <person name="Goldsmith A.D."/>
            <person name="Gurjal M."/>
            <person name="Hansen N.F."/>
            <person name="Hayashizaki Y."/>
            <person name="Johnson-Hopson C."/>
            <person name="Hsuan V.W."/>
            <person name="Iida K."/>
            <person name="Karnes M."/>
            <person name="Khan S."/>
            <person name="Koesema E."/>
            <person name="Ishida J."/>
            <person name="Jiang P.X."/>
            <person name="Jones T."/>
            <person name="Kawai J."/>
            <person name="Kamiya A."/>
            <person name="Meyers C."/>
            <person name="Nakajima M."/>
            <person name="Narusaka M."/>
            <person name="Seki M."/>
            <person name="Sakurai T."/>
            <person name="Satou M."/>
            <person name="Tamse R."/>
            <person name="Vaysberg M."/>
            <person name="Wallender E.K."/>
            <person name="Wong C."/>
            <person name="Yamamura Y."/>
            <person name="Yuan S."/>
            <person name="Shinozaki K."/>
            <person name="Davis R.W."/>
            <person name="Theologis A."/>
            <person name="Ecker J.R."/>
        </authorList>
    </citation>
    <scope>NUCLEOTIDE SEQUENCE [LARGE SCALE MRNA]</scope>
    <source>
        <strain>cv. Columbia</strain>
    </source>
</reference>
<reference key="5">
    <citation type="journal article" date="2004" name="Plant Mol. Biol.">
        <title>Identification of a novel plant MAR DNA binding protein localized on chromosomal surfaces.</title>
        <authorList>
            <person name="Fujimoto S."/>
            <person name="Matsunaga S."/>
            <person name="Yonemura M."/>
            <person name="Uchiyama S."/>
            <person name="Azuma T."/>
            <person name="Fukui K."/>
        </authorList>
    </citation>
    <scope>IDENTIFICATION</scope>
    <scope>GENE FAMILY</scope>
    <scope>NOMENCLATURE</scope>
    <source>
        <strain>cv. Columbia</strain>
    </source>
</reference>
<reference key="6">
    <citation type="journal article" date="2009" name="J. Proteomics">
        <title>Phosphoproteomic analysis of nuclei-enriched fractions from Arabidopsis thaliana.</title>
        <authorList>
            <person name="Jones A.M.E."/>
            <person name="MacLean D."/>
            <person name="Studholme D.J."/>
            <person name="Serna-Sanz A."/>
            <person name="Andreasson E."/>
            <person name="Rathjen J.P."/>
            <person name="Peck S.C."/>
        </authorList>
    </citation>
    <scope>IDENTIFICATION BY MASS SPECTROMETRY [LARGE SCALE ANALYSIS]</scope>
    <source>
        <strain>cv. Columbia</strain>
    </source>
</reference>
<reference key="7">
    <citation type="journal article" date="2013" name="Proc. Natl. Acad. Sci. U.S.A.">
        <title>Arabidopsis thaliana AHL family modulates hypocotyl growth redundantly by interacting with each other via the PPC/DUF296 domain.</title>
        <authorList>
            <person name="Zhao J."/>
            <person name="Favero D.S."/>
            <person name="Peng H."/>
            <person name="Neff M.M."/>
        </authorList>
    </citation>
    <scope>GENE FAMILY</scope>
    <scope>DOMAIN PPC</scope>
</reference>
<feature type="chain" id="PRO_0000432041" description="AT-hook motif nuclear-localized protein 23">
    <location>
        <begin position="1"/>
        <end position="292"/>
    </location>
</feature>
<feature type="domain" description="PPC" evidence="2">
    <location>
        <begin position="106"/>
        <end position="242"/>
    </location>
</feature>
<feature type="DNA-binding region" description="A.T hook" evidence="6">
    <location>
        <begin position="82"/>
        <end position="94"/>
    </location>
</feature>
<feature type="region of interest" description="Disordered" evidence="3">
    <location>
        <begin position="23"/>
        <end position="100"/>
    </location>
</feature>
<feature type="compositionally biased region" description="Gly residues" evidence="3">
    <location>
        <begin position="60"/>
        <end position="79"/>
    </location>
</feature>
<name>AHL23_ARATH</name>
<proteinExistence type="evidence at protein level"/>
<gene>
    <name evidence="5" type="primary">AHL23</name>
    <name evidence="7" type="ordered locus">At4g17800</name>
    <name evidence="8" type="ORF">dl4935c</name>
    <name evidence="9" type="ORF">FCAALL.129</name>
</gene>
<keyword id="KW-0238">DNA-binding</keyword>
<keyword id="KW-0539">Nucleus</keyword>
<keyword id="KW-1185">Reference proteome</keyword>
<keyword id="KW-0804">Transcription</keyword>
<keyword id="KW-0805">Transcription regulation</keyword>
<dbReference type="EMBL" id="Z97344">
    <property type="protein sequence ID" value="CAB10560.1"/>
    <property type="molecule type" value="Genomic_DNA"/>
</dbReference>
<dbReference type="EMBL" id="AL161547">
    <property type="protein sequence ID" value="CAB78783.1"/>
    <property type="molecule type" value="Genomic_DNA"/>
</dbReference>
<dbReference type="EMBL" id="CP002687">
    <property type="protein sequence ID" value="AEE83952.1"/>
    <property type="molecule type" value="Genomic_DNA"/>
</dbReference>
<dbReference type="EMBL" id="AF446359">
    <property type="protein sequence ID" value="AAL48232.1"/>
    <property type="molecule type" value="mRNA"/>
</dbReference>
<dbReference type="EMBL" id="AY097416">
    <property type="protein sequence ID" value="AAM19932.1"/>
    <property type="molecule type" value="mRNA"/>
</dbReference>
<dbReference type="EMBL" id="BR000359">
    <property type="protein sequence ID" value="FAA00294.1"/>
    <property type="molecule type" value="mRNA"/>
</dbReference>
<dbReference type="PIR" id="C71448">
    <property type="entry name" value="C71448"/>
</dbReference>
<dbReference type="RefSeq" id="NP_193515.1">
    <property type="nucleotide sequence ID" value="NM_117890.5"/>
</dbReference>
<dbReference type="SMR" id="O23620"/>
<dbReference type="FunCoup" id="O23620">
    <property type="interactions" value="583"/>
</dbReference>
<dbReference type="STRING" id="3702.O23620"/>
<dbReference type="GlyGen" id="O23620">
    <property type="glycosylation" value="1 site"/>
</dbReference>
<dbReference type="PaxDb" id="3702-AT4G17800.1"/>
<dbReference type="ProteomicsDB" id="245042"/>
<dbReference type="EnsemblPlants" id="AT4G17800.1">
    <property type="protein sequence ID" value="AT4G17800.1"/>
    <property type="gene ID" value="AT4G17800"/>
</dbReference>
<dbReference type="GeneID" id="827502"/>
<dbReference type="Gramene" id="AT4G17800.1">
    <property type="protein sequence ID" value="AT4G17800.1"/>
    <property type="gene ID" value="AT4G17800"/>
</dbReference>
<dbReference type="KEGG" id="ath:AT4G17800"/>
<dbReference type="Araport" id="AT4G17800"/>
<dbReference type="TAIR" id="AT4G17800">
    <property type="gene designation" value="AHL23"/>
</dbReference>
<dbReference type="eggNOG" id="ENOG502QV4F">
    <property type="taxonomic scope" value="Eukaryota"/>
</dbReference>
<dbReference type="HOGENOM" id="CLU_039808_2_0_1"/>
<dbReference type="InParanoid" id="O23620"/>
<dbReference type="OMA" id="EDESMHM"/>
<dbReference type="OrthoDB" id="1900597at2759"/>
<dbReference type="PhylomeDB" id="O23620"/>
<dbReference type="PRO" id="PR:O23620"/>
<dbReference type="Proteomes" id="UP000006548">
    <property type="component" value="Chromosome 4"/>
</dbReference>
<dbReference type="ExpressionAtlas" id="O23620">
    <property type="expression patterns" value="baseline and differential"/>
</dbReference>
<dbReference type="GO" id="GO:0005634">
    <property type="term" value="C:nucleus"/>
    <property type="evidence" value="ECO:0007669"/>
    <property type="project" value="UniProtKB-SubCell"/>
</dbReference>
<dbReference type="GO" id="GO:0003680">
    <property type="term" value="F:minor groove of adenine-thymine-rich DNA binding"/>
    <property type="evidence" value="ECO:0007669"/>
    <property type="project" value="InterPro"/>
</dbReference>
<dbReference type="CDD" id="cd11378">
    <property type="entry name" value="DUF296"/>
    <property type="match status" value="1"/>
</dbReference>
<dbReference type="FunFam" id="3.30.1330.80:FF:000001">
    <property type="entry name" value="AT-hook motif nuclear-localized protein"/>
    <property type="match status" value="1"/>
</dbReference>
<dbReference type="Gene3D" id="3.30.1330.80">
    <property type="entry name" value="Hypothetical protein, similar to alpha- acetolactate decarboxylase, domain 2"/>
    <property type="match status" value="1"/>
</dbReference>
<dbReference type="InterPro" id="IPR014476">
    <property type="entry name" value="AHL15-29"/>
</dbReference>
<dbReference type="InterPro" id="IPR005175">
    <property type="entry name" value="PPC_dom"/>
</dbReference>
<dbReference type="PANTHER" id="PTHR31100">
    <property type="entry name" value="AT-HOOK MOTIF NUCLEAR-LOCALIZED PROTEIN 15"/>
    <property type="match status" value="1"/>
</dbReference>
<dbReference type="PANTHER" id="PTHR31100:SF62">
    <property type="entry name" value="AT-HOOK MOTIF NUCLEAR-LOCALIZED PROTEIN 23"/>
    <property type="match status" value="1"/>
</dbReference>
<dbReference type="Pfam" id="PF03479">
    <property type="entry name" value="PCC"/>
    <property type="match status" value="1"/>
</dbReference>
<dbReference type="SUPFAM" id="SSF117856">
    <property type="entry name" value="AF0104/ALDC/Ptd012-like"/>
    <property type="match status" value="1"/>
</dbReference>
<dbReference type="PROSITE" id="PS51742">
    <property type="entry name" value="PPC"/>
    <property type="match status" value="1"/>
</dbReference>